<reference key="1">
    <citation type="journal article" date="2003" name="Am. J. Bot.">
        <title>Angiosperm phlyogeny based on matK sequence information.</title>
        <authorList>
            <person name="Hilu K.W."/>
            <person name="Borsch T."/>
            <person name="Mueller K.F."/>
            <person name="Soltis D.E."/>
            <person name="Soltis P.S."/>
            <person name="Savolainen V."/>
            <person name="Chase M.W."/>
            <person name="Powell M."/>
            <person name="Alice L.A."/>
            <person name="Evans R.C."/>
            <person name="Sanquet H."/>
            <person name="Neinhuis C."/>
            <person name="Slotta T.A.B."/>
            <person name="Rohwer J.G."/>
            <person name="Campbell C.S."/>
            <person name="Chatrou L.W."/>
        </authorList>
    </citation>
    <scope>NUCLEOTIDE SEQUENCE [GENOMIC DNA]</scope>
</reference>
<feature type="chain" id="PRO_0000143388" description="Maturase K">
    <location>
        <begin position="1"/>
        <end position="505"/>
    </location>
</feature>
<evidence type="ECO:0000255" key="1">
    <source>
        <dbReference type="HAMAP-Rule" id="MF_01390"/>
    </source>
</evidence>
<protein>
    <recommendedName>
        <fullName evidence="1">Maturase K</fullName>
    </recommendedName>
    <alternativeName>
        <fullName evidence="1">Intron maturase</fullName>
    </alternativeName>
</protein>
<accession>Q85V93</accession>
<dbReference type="EMBL" id="AY257530">
    <property type="protein sequence ID" value="AAP31037.1"/>
    <property type="molecule type" value="Genomic_DNA"/>
</dbReference>
<dbReference type="RefSeq" id="YP_009390538.1">
    <property type="nucleotide sequence ID" value="NC_035237.1"/>
</dbReference>
<dbReference type="GeneID" id="33351472"/>
<dbReference type="GO" id="GO:0009507">
    <property type="term" value="C:chloroplast"/>
    <property type="evidence" value="ECO:0007669"/>
    <property type="project" value="UniProtKB-SubCell"/>
</dbReference>
<dbReference type="GO" id="GO:0003723">
    <property type="term" value="F:RNA binding"/>
    <property type="evidence" value="ECO:0007669"/>
    <property type="project" value="UniProtKB-KW"/>
</dbReference>
<dbReference type="GO" id="GO:0006397">
    <property type="term" value="P:mRNA processing"/>
    <property type="evidence" value="ECO:0007669"/>
    <property type="project" value="UniProtKB-KW"/>
</dbReference>
<dbReference type="GO" id="GO:0008380">
    <property type="term" value="P:RNA splicing"/>
    <property type="evidence" value="ECO:0007669"/>
    <property type="project" value="UniProtKB-UniRule"/>
</dbReference>
<dbReference type="GO" id="GO:0008033">
    <property type="term" value="P:tRNA processing"/>
    <property type="evidence" value="ECO:0007669"/>
    <property type="project" value="UniProtKB-KW"/>
</dbReference>
<dbReference type="HAMAP" id="MF_01390">
    <property type="entry name" value="MatK"/>
    <property type="match status" value="1"/>
</dbReference>
<dbReference type="InterPro" id="IPR024937">
    <property type="entry name" value="Domain_X"/>
</dbReference>
<dbReference type="InterPro" id="IPR002866">
    <property type="entry name" value="Maturase_MatK"/>
</dbReference>
<dbReference type="InterPro" id="IPR024942">
    <property type="entry name" value="Maturase_MatK_N"/>
</dbReference>
<dbReference type="PANTHER" id="PTHR34811">
    <property type="entry name" value="MATURASE K"/>
    <property type="match status" value="1"/>
</dbReference>
<dbReference type="PANTHER" id="PTHR34811:SF1">
    <property type="entry name" value="MATURASE K"/>
    <property type="match status" value="1"/>
</dbReference>
<dbReference type="Pfam" id="PF01348">
    <property type="entry name" value="Intron_maturas2"/>
    <property type="match status" value="1"/>
</dbReference>
<dbReference type="Pfam" id="PF01824">
    <property type="entry name" value="MatK_N"/>
    <property type="match status" value="1"/>
</dbReference>
<sequence>MAEFQGYLELDRSWKPDLLYPLIFREYIYAFAHDHGLNRSNLLENVGYNNKSSLLIVKRLISRMYQQNHFISSANDSNQNQLFGYNKNLYSQMISEGFAVIVEIPFSLRLVSCLKGTEIVKYYNLRSIHSIFPFLEDKFSHLNYVSDVLIPYPIHLEILVQTLRYWVKDASSLHLLRFFLHDYYNWNSFIIPNKYISIFSKSNPRLFLFLYNSHVFEYESILLFLRNQSSHLRLTSSGGFFERIYFYGKIKHPVEEVFANDFPTSLWFFEDFFMHYVRYQGKSILTSKDTPLFMNKWRYYLVLLWQCHFSVWSQPGRMYINQLCKHSLSFLGYLSNMQINLSVVRSQMLENSFLMDNAMKKIDTLVPISPLIGSLAKMRFCNVLGHPVSKSTWADSSDFDIIDRFAYICRNLFHYYSGSSKKNSLYRVKYILRLSCIKTLARKHKSTVRTFLKRLGSKLLEEFFTEEEEVLSLIFPRTYSALRSSYKGRIWYLDIFCINDLVNHK</sequence>
<name>MATK_FICCA</name>
<keyword id="KW-0150">Chloroplast</keyword>
<keyword id="KW-0507">mRNA processing</keyword>
<keyword id="KW-0934">Plastid</keyword>
<keyword id="KW-0694">RNA-binding</keyword>
<keyword id="KW-0819">tRNA processing</keyword>
<organism>
    <name type="scientific">Ficus carica</name>
    <name type="common">Common fig</name>
    <dbReference type="NCBI Taxonomy" id="3494"/>
    <lineage>
        <taxon>Eukaryota</taxon>
        <taxon>Viridiplantae</taxon>
        <taxon>Streptophyta</taxon>
        <taxon>Embryophyta</taxon>
        <taxon>Tracheophyta</taxon>
        <taxon>Spermatophyta</taxon>
        <taxon>Magnoliopsida</taxon>
        <taxon>eudicotyledons</taxon>
        <taxon>Gunneridae</taxon>
        <taxon>Pentapetalae</taxon>
        <taxon>rosids</taxon>
        <taxon>fabids</taxon>
        <taxon>Rosales</taxon>
        <taxon>Moraceae</taxon>
        <taxon>Ficeae</taxon>
        <taxon>Ficus</taxon>
    </lineage>
</organism>
<comment type="function">
    <text evidence="1">Usually encoded in the trnK tRNA gene intron. Probably assists in splicing its own and other chloroplast group II introns.</text>
</comment>
<comment type="subcellular location">
    <subcellularLocation>
        <location>Plastid</location>
        <location>Chloroplast</location>
    </subcellularLocation>
</comment>
<comment type="similarity">
    <text evidence="1">Belongs to the intron maturase 2 family. MatK subfamily.</text>
</comment>
<proteinExistence type="inferred from homology"/>
<gene>
    <name evidence="1" type="primary">matK</name>
</gene>
<geneLocation type="chloroplast"/>